<feature type="chain" id="PRO_1000004228" description="Oligoribonuclease">
    <location>
        <begin position="1"/>
        <end position="181"/>
    </location>
</feature>
<feature type="domain" description="Exonuclease" evidence="1">
    <location>
        <begin position="8"/>
        <end position="171"/>
    </location>
</feature>
<feature type="active site" evidence="1">
    <location>
        <position position="129"/>
    </location>
</feature>
<evidence type="ECO:0000255" key="1">
    <source>
        <dbReference type="HAMAP-Rule" id="MF_00045"/>
    </source>
</evidence>
<proteinExistence type="inferred from homology"/>
<name>ORN_ALCBS</name>
<keyword id="KW-0963">Cytoplasm</keyword>
<keyword id="KW-0269">Exonuclease</keyword>
<keyword id="KW-0378">Hydrolase</keyword>
<keyword id="KW-0540">Nuclease</keyword>
<keyword id="KW-1185">Reference proteome</keyword>
<accession>Q0VME0</accession>
<sequence length="181" mass="20522">MTDKRNNLIWIDLEMTGLSPENDRIIEIATIVTDAELNVLAEGPVLAVHQSDALLDGMDEWNTTHHNNSGLVARVKASTVNDAAAESQTIAFLEQYVEAGMSPMCGNSICQDRRFLANYMPKLEAFFHYRNLDVSTLKELARRWKPDILPGFSKENKHLALDDIRESIAELVYYREHFIDA</sequence>
<protein>
    <recommendedName>
        <fullName evidence="1">Oligoribonuclease</fullName>
        <ecNumber evidence="1">3.1.15.-</ecNumber>
    </recommendedName>
</protein>
<dbReference type="EC" id="3.1.15.-" evidence="1"/>
<dbReference type="EMBL" id="AM286690">
    <property type="protein sequence ID" value="CAL17658.1"/>
    <property type="molecule type" value="Genomic_DNA"/>
</dbReference>
<dbReference type="RefSeq" id="WP_011589486.1">
    <property type="nucleotide sequence ID" value="NC_008260.1"/>
</dbReference>
<dbReference type="SMR" id="Q0VME0"/>
<dbReference type="STRING" id="393595.ABO_2210"/>
<dbReference type="KEGG" id="abo:ABO_2210"/>
<dbReference type="eggNOG" id="COG1949">
    <property type="taxonomic scope" value="Bacteria"/>
</dbReference>
<dbReference type="HOGENOM" id="CLU_064761_2_0_6"/>
<dbReference type="OrthoDB" id="9801329at2"/>
<dbReference type="Proteomes" id="UP000008871">
    <property type="component" value="Chromosome"/>
</dbReference>
<dbReference type="GO" id="GO:0005737">
    <property type="term" value="C:cytoplasm"/>
    <property type="evidence" value="ECO:0007669"/>
    <property type="project" value="UniProtKB-SubCell"/>
</dbReference>
<dbReference type="GO" id="GO:0000175">
    <property type="term" value="F:3'-5'-RNA exonuclease activity"/>
    <property type="evidence" value="ECO:0007669"/>
    <property type="project" value="InterPro"/>
</dbReference>
<dbReference type="GO" id="GO:0003676">
    <property type="term" value="F:nucleic acid binding"/>
    <property type="evidence" value="ECO:0007669"/>
    <property type="project" value="InterPro"/>
</dbReference>
<dbReference type="GO" id="GO:0006259">
    <property type="term" value="P:DNA metabolic process"/>
    <property type="evidence" value="ECO:0007669"/>
    <property type="project" value="UniProtKB-ARBA"/>
</dbReference>
<dbReference type="CDD" id="cd06135">
    <property type="entry name" value="Orn"/>
    <property type="match status" value="1"/>
</dbReference>
<dbReference type="FunFam" id="3.30.420.10:FF:000003">
    <property type="entry name" value="Oligoribonuclease"/>
    <property type="match status" value="1"/>
</dbReference>
<dbReference type="Gene3D" id="3.30.420.10">
    <property type="entry name" value="Ribonuclease H-like superfamily/Ribonuclease H"/>
    <property type="match status" value="1"/>
</dbReference>
<dbReference type="HAMAP" id="MF_00045">
    <property type="entry name" value="Oligoribonuclease"/>
    <property type="match status" value="1"/>
</dbReference>
<dbReference type="InterPro" id="IPR013520">
    <property type="entry name" value="Exonuclease_RNaseT/DNA_pol3"/>
</dbReference>
<dbReference type="InterPro" id="IPR022894">
    <property type="entry name" value="Oligoribonuclease"/>
</dbReference>
<dbReference type="InterPro" id="IPR012337">
    <property type="entry name" value="RNaseH-like_sf"/>
</dbReference>
<dbReference type="InterPro" id="IPR036397">
    <property type="entry name" value="RNaseH_sf"/>
</dbReference>
<dbReference type="NCBIfam" id="NF003765">
    <property type="entry name" value="PRK05359.1"/>
    <property type="match status" value="1"/>
</dbReference>
<dbReference type="PANTHER" id="PTHR11046">
    <property type="entry name" value="OLIGORIBONUCLEASE, MITOCHONDRIAL"/>
    <property type="match status" value="1"/>
</dbReference>
<dbReference type="PANTHER" id="PTHR11046:SF0">
    <property type="entry name" value="OLIGORIBONUCLEASE, MITOCHONDRIAL"/>
    <property type="match status" value="1"/>
</dbReference>
<dbReference type="Pfam" id="PF00929">
    <property type="entry name" value="RNase_T"/>
    <property type="match status" value="1"/>
</dbReference>
<dbReference type="SMART" id="SM00479">
    <property type="entry name" value="EXOIII"/>
    <property type="match status" value="1"/>
</dbReference>
<dbReference type="SUPFAM" id="SSF53098">
    <property type="entry name" value="Ribonuclease H-like"/>
    <property type="match status" value="1"/>
</dbReference>
<comment type="function">
    <text evidence="1">3'-to-5' exoribonuclease specific for small oligoribonucleotides.</text>
</comment>
<comment type="subcellular location">
    <subcellularLocation>
        <location evidence="1">Cytoplasm</location>
    </subcellularLocation>
</comment>
<comment type="similarity">
    <text evidence="1">Belongs to the oligoribonuclease family.</text>
</comment>
<organism>
    <name type="scientific">Alcanivorax borkumensis (strain ATCC 700651 / DSM 11573 / NCIMB 13689 / SK2)</name>
    <dbReference type="NCBI Taxonomy" id="393595"/>
    <lineage>
        <taxon>Bacteria</taxon>
        <taxon>Pseudomonadati</taxon>
        <taxon>Pseudomonadota</taxon>
        <taxon>Gammaproteobacteria</taxon>
        <taxon>Oceanospirillales</taxon>
        <taxon>Alcanivoracaceae</taxon>
        <taxon>Alcanivorax</taxon>
    </lineage>
</organism>
<gene>
    <name evidence="1" type="primary">orn</name>
    <name type="ordered locus">ABO_2210</name>
</gene>
<reference key="1">
    <citation type="journal article" date="2006" name="Nat. Biotechnol.">
        <title>Genome sequence of the ubiquitous hydrocarbon-degrading marine bacterium Alcanivorax borkumensis.</title>
        <authorList>
            <person name="Schneiker S."/>
            <person name="Martins dos Santos V.A.P."/>
            <person name="Bartels D."/>
            <person name="Bekel T."/>
            <person name="Brecht M."/>
            <person name="Buhrmester J."/>
            <person name="Chernikova T.N."/>
            <person name="Denaro R."/>
            <person name="Ferrer M."/>
            <person name="Gertler C."/>
            <person name="Goesmann A."/>
            <person name="Golyshina O.V."/>
            <person name="Kaminski F."/>
            <person name="Khachane A.N."/>
            <person name="Lang S."/>
            <person name="Linke B."/>
            <person name="McHardy A.C."/>
            <person name="Meyer F."/>
            <person name="Nechitaylo T."/>
            <person name="Puehler A."/>
            <person name="Regenhardt D."/>
            <person name="Rupp O."/>
            <person name="Sabirova J.S."/>
            <person name="Selbitschka W."/>
            <person name="Yakimov M.M."/>
            <person name="Timmis K.N."/>
            <person name="Vorhoelter F.-J."/>
            <person name="Weidner S."/>
            <person name="Kaiser O."/>
            <person name="Golyshin P.N."/>
        </authorList>
    </citation>
    <scope>NUCLEOTIDE SEQUENCE [LARGE SCALE GENOMIC DNA]</scope>
    <source>
        <strain>ATCC 700651 / DSM 11573 / NCIMB 13689 / SK2</strain>
    </source>
</reference>